<accession>P34643</accession>
<accession>M1ZK05</accession>
<feature type="chain" id="PRO_0000065519" description="Protein transport protein sec-16A.1">
    <location>
        <begin position="1"/>
        <end position="1232"/>
    </location>
</feature>
<feature type="region of interest" description="Disordered" evidence="1">
    <location>
        <begin position="18"/>
        <end position="134"/>
    </location>
</feature>
<feature type="region of interest" description="Disordered" evidence="1">
    <location>
        <begin position="172"/>
        <end position="193"/>
    </location>
</feature>
<feature type="region of interest" description="Disordered" evidence="1">
    <location>
        <begin position="815"/>
        <end position="843"/>
    </location>
</feature>
<feature type="region of interest" description="Disordered" evidence="1">
    <location>
        <begin position="866"/>
        <end position="942"/>
    </location>
</feature>
<feature type="region of interest" description="Disordered" evidence="1">
    <location>
        <begin position="972"/>
        <end position="1069"/>
    </location>
</feature>
<feature type="region of interest" description="Disordered" evidence="1">
    <location>
        <begin position="1140"/>
        <end position="1232"/>
    </location>
</feature>
<feature type="compositionally biased region" description="Polar residues" evidence="1">
    <location>
        <begin position="26"/>
        <end position="37"/>
    </location>
</feature>
<feature type="compositionally biased region" description="Low complexity" evidence="1">
    <location>
        <begin position="67"/>
        <end position="76"/>
    </location>
</feature>
<feature type="compositionally biased region" description="Polar residues" evidence="1">
    <location>
        <begin position="78"/>
        <end position="100"/>
    </location>
</feature>
<feature type="compositionally biased region" description="Polar residues" evidence="1">
    <location>
        <begin position="817"/>
        <end position="836"/>
    </location>
</feature>
<feature type="compositionally biased region" description="Low complexity" evidence="1">
    <location>
        <begin position="896"/>
        <end position="914"/>
    </location>
</feature>
<feature type="compositionally biased region" description="Polar residues" evidence="1">
    <location>
        <begin position="1046"/>
        <end position="1060"/>
    </location>
</feature>
<feature type="compositionally biased region" description="Polar residues" evidence="1">
    <location>
        <begin position="1149"/>
        <end position="1159"/>
    </location>
</feature>
<feature type="compositionally biased region" description="Polar residues" evidence="1">
    <location>
        <begin position="1168"/>
        <end position="1178"/>
    </location>
</feature>
<feature type="compositionally biased region" description="Low complexity" evidence="1">
    <location>
        <begin position="1194"/>
        <end position="1203"/>
    </location>
</feature>
<feature type="compositionally biased region" description="Polar residues" evidence="1">
    <location>
        <begin position="1222"/>
        <end position="1232"/>
    </location>
</feature>
<feature type="splice variant" id="VSP_053667" description="In isoform b." evidence="5">
    <location>
        <begin position="1"/>
        <end position="8"/>
    </location>
</feature>
<gene>
    <name evidence="6" type="primary">sec-16A.1</name>
    <name evidence="4 6" type="synonym">sec-16</name>
    <name evidence="6" type="ORF">ZK512.5</name>
</gene>
<comment type="function">
    <text evidence="2">Plays a role in the organization of the endoplasmic reticulum exit sites (ERES), also known as transitional endoplasmic reticulum (tER) (PubMed:21478858). In association with tfg-1, accumulates at ERES to positively regulate secretory cargo trafficking from the endoplasmic reticulum to the endoplasmic reticulum-Golgi intermediate compartment (ERGIC) and Golgi apparatus (PubMed:21478858).</text>
</comment>
<comment type="subunit">
    <text evidence="2">Interacts with tfg-1 (via N-terminus); the interaction is direct and is required for both the localization of tfg-1 and to maintain the distribution of sec-16A.1 at endoplasmic reticulum exit sites (ERES).</text>
</comment>
<comment type="subcellular location">
    <subcellularLocation>
        <location evidence="2">Endoplasmic reticulum</location>
    </subcellularLocation>
    <subcellularLocation>
        <location evidence="3">Endoplasmic reticulum-Golgi intermediate compartment</location>
    </subcellularLocation>
    <text evidence="2">Co-localizes with tfg-1 at endoplasmic reticulum exit sites (ERES).</text>
</comment>
<comment type="alternative products">
    <event type="alternative splicing"/>
    <isoform>
        <id>P34643-1</id>
        <name evidence="6">a</name>
        <sequence type="displayed"/>
    </isoform>
    <isoform>
        <id>P34643-2</id>
        <name evidence="7">b</name>
        <sequence type="described" ref="VSP_053667"/>
    </isoform>
</comment>
<comment type="disruption phenotype">
    <text evidence="2">RNAi-mediated knockdown abolishes localization of tfg-1 to endoplasmic reticulum exit sites (ERES).</text>
</comment>
<comment type="similarity">
    <text evidence="5">Belongs to the SEC16 family.</text>
</comment>
<proteinExistence type="evidence at protein level"/>
<keyword id="KW-0025">Alternative splicing</keyword>
<keyword id="KW-0256">Endoplasmic reticulum</keyword>
<keyword id="KW-0931">ER-Golgi transport</keyword>
<keyword id="KW-1185">Reference proteome</keyword>
<keyword id="KW-0813">Transport</keyword>
<evidence type="ECO:0000256" key="1">
    <source>
        <dbReference type="SAM" id="MobiDB-lite"/>
    </source>
</evidence>
<evidence type="ECO:0000269" key="2">
    <source>
    </source>
</evidence>
<evidence type="ECO:0000269" key="3">
    <source>
    </source>
</evidence>
<evidence type="ECO:0000303" key="4">
    <source>
    </source>
</evidence>
<evidence type="ECO:0000305" key="5"/>
<evidence type="ECO:0000312" key="6">
    <source>
        <dbReference type="WormBase" id="ZK512.5a"/>
    </source>
</evidence>
<evidence type="ECO:0000312" key="7">
    <source>
        <dbReference type="WormBase" id="ZK512.5b"/>
    </source>
</evidence>
<organism>
    <name type="scientific">Caenorhabditis elegans</name>
    <dbReference type="NCBI Taxonomy" id="6239"/>
    <lineage>
        <taxon>Eukaryota</taxon>
        <taxon>Metazoa</taxon>
        <taxon>Ecdysozoa</taxon>
        <taxon>Nematoda</taxon>
        <taxon>Chromadorea</taxon>
        <taxon>Rhabditida</taxon>
        <taxon>Rhabditina</taxon>
        <taxon>Rhabditomorpha</taxon>
        <taxon>Rhabditoidea</taxon>
        <taxon>Rhabditidae</taxon>
        <taxon>Peloderinae</taxon>
        <taxon>Caenorhabditis</taxon>
    </lineage>
</organism>
<reference key="1">
    <citation type="journal article" date="1994" name="Nature">
        <title>2.2 Mb of contiguous nucleotide sequence from chromosome III of C. elegans.</title>
        <authorList>
            <person name="Wilson R."/>
            <person name="Ainscough R."/>
            <person name="Anderson K."/>
            <person name="Baynes C."/>
            <person name="Berks M."/>
            <person name="Bonfield J."/>
            <person name="Burton J."/>
            <person name="Connell M."/>
            <person name="Copsey T."/>
            <person name="Cooper J."/>
            <person name="Coulson A."/>
            <person name="Craxton M."/>
            <person name="Dear S."/>
            <person name="Du Z."/>
            <person name="Durbin R."/>
            <person name="Favello A."/>
            <person name="Fraser A."/>
            <person name="Fulton L."/>
            <person name="Gardner A."/>
            <person name="Green P."/>
            <person name="Hawkins T."/>
            <person name="Hillier L."/>
            <person name="Jier M."/>
            <person name="Johnston L."/>
            <person name="Jones M."/>
            <person name="Kershaw J."/>
            <person name="Kirsten J."/>
            <person name="Laisster N."/>
            <person name="Latreille P."/>
            <person name="Lightning J."/>
            <person name="Lloyd C."/>
            <person name="Mortimore B."/>
            <person name="O'Callaghan M."/>
            <person name="Parsons J."/>
            <person name="Percy C."/>
            <person name="Rifken L."/>
            <person name="Roopra A."/>
            <person name="Saunders D."/>
            <person name="Shownkeen R."/>
            <person name="Sims M."/>
            <person name="Smaldon N."/>
            <person name="Smith A."/>
            <person name="Smith M."/>
            <person name="Sonnhammer E."/>
            <person name="Staden R."/>
            <person name="Sulston J."/>
            <person name="Thierry-Mieg J."/>
            <person name="Thomas K."/>
            <person name="Vaudin M."/>
            <person name="Vaughan K."/>
            <person name="Waterston R."/>
            <person name="Watson A."/>
            <person name="Weinstock L."/>
            <person name="Wilkinson-Sproat J."/>
            <person name="Wohldman P."/>
        </authorList>
    </citation>
    <scope>NUCLEOTIDE SEQUENCE [LARGE SCALE GENOMIC DNA]</scope>
    <scope>ALTERNATIVE SPLICING</scope>
    <source>
        <strain>Bristol N2</strain>
    </source>
</reference>
<reference key="2">
    <citation type="journal article" date="1998" name="Science">
        <title>Genome sequence of the nematode C. elegans: a platform for investigating biology.</title>
        <authorList>
            <consortium name="The C. elegans sequencing consortium"/>
        </authorList>
    </citation>
    <scope>NUCLEOTIDE SEQUENCE [LARGE SCALE GENOMIC DNA]</scope>
    <source>
        <strain>Bristol N2</strain>
    </source>
</reference>
<reference key="3">
    <citation type="journal article" date="2011" name="Nat. Cell Biol.">
        <title>TFG-1 function in protein secretion and oncogenesis.</title>
        <authorList>
            <person name="Witte K."/>
            <person name="Schuh A.L."/>
            <person name="Hegermann J."/>
            <person name="Sarkeshik A."/>
            <person name="Mayers J.R."/>
            <person name="Schwarze K."/>
            <person name="Yates J.R. III"/>
            <person name="Eimer S."/>
            <person name="Audhya A."/>
        </authorList>
    </citation>
    <scope>IDENTIFICATION BY MASS SPECTROMETRY</scope>
    <scope>FUNCTION</scope>
    <scope>INTERACTION WITH TFG-1</scope>
    <scope>SUBCELLULAR LOCATION</scope>
    <scope>DISRUPTION PHENOTYPE</scope>
</reference>
<reference key="4">
    <citation type="journal article" date="2013" name="PLoS ONE">
        <title>The ArfGEF GBF-1 Is Required for ER Structure, Secretion and Endocytic Transport in C. elegans.</title>
        <authorList>
            <person name="Ackema K.B."/>
            <person name="Sauder U."/>
            <person name="Solinger J.A."/>
            <person name="Spang A."/>
        </authorList>
    </citation>
    <scope>SUBCELLULAR LOCATION</scope>
</reference>
<dbReference type="EMBL" id="BX284603">
    <property type="protein sequence ID" value="CAA80146.1"/>
    <property type="molecule type" value="Genomic_DNA"/>
</dbReference>
<dbReference type="EMBL" id="BX284603">
    <property type="protein sequence ID" value="CCU83371.1"/>
    <property type="molecule type" value="Genomic_DNA"/>
</dbReference>
<dbReference type="PIR" id="S40766">
    <property type="entry name" value="S40766"/>
</dbReference>
<dbReference type="RefSeq" id="NP_001293651.1">
    <molecule id="P34643-2"/>
    <property type="nucleotide sequence ID" value="NM_001306722.3"/>
</dbReference>
<dbReference type="RefSeq" id="NP_499022.1">
    <molecule id="P34643-1"/>
    <property type="nucleotide sequence ID" value="NM_066621.5"/>
</dbReference>
<dbReference type="BioGRID" id="41488">
    <property type="interactions" value="28"/>
</dbReference>
<dbReference type="DIP" id="DIP-25929N"/>
<dbReference type="FunCoup" id="P34643">
    <property type="interactions" value="108"/>
</dbReference>
<dbReference type="IntAct" id="P34643">
    <property type="interactions" value="7"/>
</dbReference>
<dbReference type="STRING" id="6239.ZK512.5a.1"/>
<dbReference type="iPTMnet" id="P34643"/>
<dbReference type="PaxDb" id="6239-ZK512.5a"/>
<dbReference type="PeptideAtlas" id="P34643"/>
<dbReference type="EnsemblMetazoa" id="ZK512.5a.1">
    <molecule id="P34643-1"/>
    <property type="protein sequence ID" value="ZK512.5a.1"/>
    <property type="gene ID" value="WBGene00013985"/>
</dbReference>
<dbReference type="EnsemblMetazoa" id="ZK512.5b.1">
    <molecule id="P34643-2"/>
    <property type="protein sequence ID" value="ZK512.5b.1"/>
    <property type="gene ID" value="WBGene00013985"/>
</dbReference>
<dbReference type="GeneID" id="176289"/>
<dbReference type="KEGG" id="cel:CELE_ZK512.5"/>
<dbReference type="UCSC" id="ZK512.5">
    <molecule id="P34643-1"/>
    <property type="organism name" value="c. elegans"/>
</dbReference>
<dbReference type="AGR" id="WB:WBGene00013985"/>
<dbReference type="CTD" id="176289"/>
<dbReference type="WormBase" id="ZK512.5a">
    <molecule id="P34643-1"/>
    <property type="protein sequence ID" value="CE00411"/>
    <property type="gene ID" value="WBGene00013985"/>
    <property type="gene designation" value="sec-16A.1"/>
</dbReference>
<dbReference type="WormBase" id="ZK512.5b">
    <molecule id="P34643-2"/>
    <property type="protein sequence ID" value="CE48211"/>
    <property type="gene ID" value="WBGene00013985"/>
    <property type="gene designation" value="sec-16A.1"/>
</dbReference>
<dbReference type="eggNOG" id="KOG1913">
    <property type="taxonomic scope" value="Eukaryota"/>
</dbReference>
<dbReference type="HOGENOM" id="CLU_257407_0_0_1"/>
<dbReference type="InParanoid" id="P34643"/>
<dbReference type="OMA" id="ERVEYIM"/>
<dbReference type="OrthoDB" id="8918678at2759"/>
<dbReference type="Reactome" id="R-CEL-204005">
    <property type="pathway name" value="COPII-mediated vesicle transport"/>
</dbReference>
<dbReference type="SignaLink" id="P34643"/>
<dbReference type="PRO" id="PR:P34643"/>
<dbReference type="Proteomes" id="UP000001940">
    <property type="component" value="Chromosome III"/>
</dbReference>
<dbReference type="Bgee" id="WBGene00013985">
    <property type="expression patterns" value="Expressed in pharyngeal muscle cell (C elegans) and 4 other cell types or tissues"/>
</dbReference>
<dbReference type="GO" id="GO:0070971">
    <property type="term" value="C:endoplasmic reticulum exit site"/>
    <property type="evidence" value="ECO:0000314"/>
    <property type="project" value="WormBase"/>
</dbReference>
<dbReference type="GO" id="GO:0005793">
    <property type="term" value="C:endoplasmic reticulum-Golgi intermediate compartment"/>
    <property type="evidence" value="ECO:0007669"/>
    <property type="project" value="UniProtKB-SubCell"/>
</dbReference>
<dbReference type="GO" id="GO:0012507">
    <property type="term" value="C:ER to Golgi transport vesicle membrane"/>
    <property type="evidence" value="ECO:0000318"/>
    <property type="project" value="GO_Central"/>
</dbReference>
<dbReference type="GO" id="GO:0006888">
    <property type="term" value="P:endoplasmic reticulum to Golgi vesicle-mediated transport"/>
    <property type="evidence" value="ECO:0000315"/>
    <property type="project" value="WormBase"/>
</dbReference>
<dbReference type="GO" id="GO:0007030">
    <property type="term" value="P:Golgi organization"/>
    <property type="evidence" value="ECO:0000318"/>
    <property type="project" value="GO_Central"/>
</dbReference>
<dbReference type="GO" id="GO:0070973">
    <property type="term" value="P:protein localization to endoplasmic reticulum exit site"/>
    <property type="evidence" value="ECO:0000315"/>
    <property type="project" value="WormBase"/>
</dbReference>
<dbReference type="CDD" id="cd09233">
    <property type="entry name" value="ACE1-Sec16-like"/>
    <property type="match status" value="1"/>
</dbReference>
<dbReference type="FunFam" id="1.25.40.1030:FF:000013">
    <property type="entry name" value="Protein transport protein sec16"/>
    <property type="match status" value="1"/>
</dbReference>
<dbReference type="Gene3D" id="1.25.40.1030">
    <property type="match status" value="1"/>
</dbReference>
<dbReference type="InterPro" id="IPR024340">
    <property type="entry name" value="Sec16_CCD"/>
</dbReference>
<dbReference type="InterPro" id="IPR024298">
    <property type="entry name" value="Sec16_Sec23-bd"/>
</dbReference>
<dbReference type="PANTHER" id="PTHR13402">
    <property type="entry name" value="RGPR-RELATED"/>
    <property type="match status" value="1"/>
</dbReference>
<dbReference type="PANTHER" id="PTHR13402:SF6">
    <property type="entry name" value="SECRETORY 16, ISOFORM I"/>
    <property type="match status" value="1"/>
</dbReference>
<dbReference type="Pfam" id="PF12932">
    <property type="entry name" value="Sec16"/>
    <property type="match status" value="1"/>
</dbReference>
<dbReference type="Pfam" id="PF12931">
    <property type="entry name" value="TPR_Sec16"/>
    <property type="match status" value="1"/>
</dbReference>
<protein>
    <recommendedName>
        <fullName evidence="5">Protein transport protein sec-16A.1</fullName>
    </recommendedName>
    <alternativeName>
        <fullName evidence="5">Secretory cargo traffic protein sec-16A.1</fullName>
    </alternativeName>
</protein>
<name>SC161_CAEEL</name>
<sequence>MRRYRIDSMKYEQRMNAGASGFDMSDWNNPYNASPPSSRGGDDDASSVNHSRPRRSRLDNDIPQPRRPILIQPARPVSQKSNRQGTGMSNGSRGLNSTFNGYDRTYSRYHQNSSRGPSEGFSGAPSARNASGYASDYANSRAGVGLLPNNHREPVRPRSTAAERYANASSMRNGFVYDSGESDKTSEELEEDEEEEEVRNFYMEGRAQGSRSVTNTLASEVYNSESESYYYGVVKLGSAIVDHVFRTMPPPEKYYKMPPIDRVAYVFYCAVNNKPYNNIDEFHVIFNREFYSYRGYGDSKDLALFKVCKRMQEEFSLKQLEADRLAYEKARQEAAESEKLDFNQHKIEEREEPKLNISQPEEVLSNGPLHYHSCLQFATIGVGGKLVIIKPAGTIDSITGHVLSTSSVHVDDLKTFLHFDEQSGKVIESVQNFKGPLIAGQTPTHSVRLYIQRQIDALRQIRNAGDVKKSEVVDALLVWQLLEIMVQQHGRVTGPDVATLLTNASEELGEKTGISSNGTSESGSKFEAKERFNKYLLGGHINEAVESAITDGLYADAMTLIRRLHPNDAKKIEEIEARFMNLRSIDDPFATLVAVSSDQPPPILTNSAFDDDNNWKRHAAIVLANLNSQTAMQTIYHLGLLLAKRERNCAADFCLLVVCILAGYDPFIPVAHDGDETSRKHIGLVHSGSNLLNRVDGLSGTAGFSFTDLHATDIFDYALRLGNNNVDSPLAKSIDYQLARIEYAKKLSSFGGFATDAFRYCTEVARSLWMYVAAFDKNAMFDLCDLAESLQYMAAATPDESGWITTMRGMLGAAPVQESQQHVPQPQPVENKSISSEAKKWHDEHQAPLEIGSRNDQQHNDKTVEKPIAPGRASLPPPTLVTESSSESTFTDKSDSSVTVAASASRTSTLTSSTLPPPPSLPKTIEKPISTPPPISKNVVPEMTPPAIVKPPMPTLSMPIPPVSTPIMVSPQPIPIPKPVDASIAKSPRSELDDLWDTSPPSNQTSYPPAPRNIQPSYSPAPNFANPTAPSVPTPPPAVSSAPVLQQATLGQASIPNAKTTAPPVPQKQPELALNERKASKGWFGSIKEKVIKSIPSANQMILPDDSKPSIVWDPVQKRYVGAGVEEEVVAAPPPVMSAPHLMGGGPDSNKSSTNSLRSARSGVGSRYLQSGMATSQAPAMDTGMPPMMPPTMPMSFSFMPAPTEDDSSEYVDPFSGEPTAPSESLSKQNND</sequence>